<accession>O60563</accession>
<accession>A9XU13</accession>
<accession>E7EX76</accession>
<accession>O60581</accession>
<evidence type="ECO:0000255" key="1"/>
<evidence type="ECO:0000256" key="2">
    <source>
        <dbReference type="SAM" id="MobiDB-lite"/>
    </source>
</evidence>
<evidence type="ECO:0000269" key="3">
    <source>
    </source>
</evidence>
<evidence type="ECO:0000269" key="4">
    <source>
    </source>
</evidence>
<evidence type="ECO:0000269" key="5">
    <source>
    </source>
</evidence>
<evidence type="ECO:0000269" key="6">
    <source>
    </source>
</evidence>
<evidence type="ECO:0000269" key="7">
    <source>
    </source>
</evidence>
<evidence type="ECO:0000269" key="8">
    <source>
    </source>
</evidence>
<evidence type="ECO:0000269" key="9">
    <source>
    </source>
</evidence>
<evidence type="ECO:0000269" key="10">
    <source>
    </source>
</evidence>
<evidence type="ECO:0000269" key="11">
    <source>
    </source>
</evidence>
<evidence type="ECO:0000269" key="12">
    <source>
    </source>
</evidence>
<evidence type="ECO:0000269" key="13">
    <source>
    </source>
</evidence>
<evidence type="ECO:0000269" key="14">
    <source>
    </source>
</evidence>
<evidence type="ECO:0000269" key="15">
    <source>
    </source>
</evidence>
<evidence type="ECO:0000269" key="16">
    <source>
    </source>
</evidence>
<evidence type="ECO:0000269" key="17">
    <source>
    </source>
</evidence>
<evidence type="ECO:0000269" key="18">
    <source>
    </source>
</evidence>
<evidence type="ECO:0000269" key="19">
    <source>
    </source>
</evidence>
<evidence type="ECO:0000269" key="20">
    <source>
    </source>
</evidence>
<evidence type="ECO:0000269" key="21">
    <source>
    </source>
</evidence>
<evidence type="ECO:0000269" key="22">
    <source>
    </source>
</evidence>
<evidence type="ECO:0000269" key="23">
    <source>
    </source>
</evidence>
<evidence type="ECO:0000303" key="24">
    <source>
    </source>
</evidence>
<evidence type="ECO:0000303" key="25">
    <source ref="3"/>
</evidence>
<evidence type="ECO:0000305" key="26"/>
<evidence type="ECO:0000305" key="27">
    <source>
    </source>
</evidence>
<evidence type="ECO:0007744" key="28">
    <source>
    </source>
</evidence>
<evidence type="ECO:0007744" key="29">
    <source>
    </source>
</evidence>
<evidence type="ECO:0007744" key="30">
    <source>
    </source>
</evidence>
<evidence type="ECO:0007744" key="31">
    <source>
    </source>
</evidence>
<evidence type="ECO:0007744" key="32">
    <source>
    </source>
</evidence>
<evidence type="ECO:0007744" key="33">
    <source>
    </source>
</evidence>
<evidence type="ECO:0007829" key="34">
    <source>
        <dbReference type="PDB" id="2PK2"/>
    </source>
</evidence>
<evidence type="ECO:0007829" key="35">
    <source>
        <dbReference type="PDB" id="3BLH"/>
    </source>
</evidence>
<evidence type="ECO:0007829" key="36">
    <source>
        <dbReference type="PDB" id="3MI9"/>
    </source>
</evidence>
<gene>
    <name type="primary">CCNT1</name>
</gene>
<dbReference type="EMBL" id="AF045161">
    <property type="protein sequence ID" value="AAC39638.1"/>
    <property type="molecule type" value="mRNA"/>
</dbReference>
<dbReference type="EMBL" id="AF048730">
    <property type="protein sequence ID" value="AAC39664.1"/>
    <property type="molecule type" value="mRNA"/>
</dbReference>
<dbReference type="EMBL" id="EF688064">
    <property type="protein sequence ID" value="ABV58572.1"/>
    <property type="molecule type" value="mRNA"/>
</dbReference>
<dbReference type="EMBL" id="AC079951">
    <property type="status" value="NOT_ANNOTATED_CDS"/>
    <property type="molecule type" value="Genomic_DNA"/>
</dbReference>
<dbReference type="CCDS" id="CCDS61109.1">
    <molecule id="O60563-2"/>
</dbReference>
<dbReference type="CCDS" id="CCDS8766.1">
    <molecule id="O60563-1"/>
</dbReference>
<dbReference type="RefSeq" id="NP_001231.2">
    <molecule id="O60563-1"/>
    <property type="nucleotide sequence ID" value="NM_001240.3"/>
</dbReference>
<dbReference type="RefSeq" id="NP_001264771.1">
    <molecule id="O60563-2"/>
    <property type="nucleotide sequence ID" value="NM_001277842.2"/>
</dbReference>
<dbReference type="PDB" id="2PK2">
    <property type="method" value="X-ray"/>
    <property type="resolution" value="2.67 A"/>
    <property type="chains" value="A/B/C/D=1-281"/>
</dbReference>
<dbReference type="PDB" id="3BLH">
    <property type="method" value="X-ray"/>
    <property type="resolution" value="2.48 A"/>
    <property type="chains" value="B=2-259"/>
</dbReference>
<dbReference type="PDB" id="3BLQ">
    <property type="method" value="X-ray"/>
    <property type="resolution" value="2.90 A"/>
    <property type="chains" value="B=2-259"/>
</dbReference>
<dbReference type="PDB" id="3BLR">
    <property type="method" value="X-ray"/>
    <property type="resolution" value="2.80 A"/>
    <property type="chains" value="B=2-259"/>
</dbReference>
<dbReference type="PDB" id="3LQ5">
    <property type="method" value="X-ray"/>
    <property type="resolution" value="3.00 A"/>
    <property type="chains" value="B=2-259"/>
</dbReference>
<dbReference type="PDB" id="3MI9">
    <property type="method" value="X-ray"/>
    <property type="resolution" value="2.10 A"/>
    <property type="chains" value="B=1-266"/>
</dbReference>
<dbReference type="PDB" id="3MIA">
    <property type="method" value="X-ray"/>
    <property type="resolution" value="3.00 A"/>
    <property type="chains" value="B=1-266"/>
</dbReference>
<dbReference type="PDB" id="3MY1">
    <property type="method" value="X-ray"/>
    <property type="resolution" value="2.80 A"/>
    <property type="chains" value="B=2-259"/>
</dbReference>
<dbReference type="PDB" id="3TN8">
    <property type="method" value="X-ray"/>
    <property type="resolution" value="2.95 A"/>
    <property type="chains" value="B=2-259"/>
</dbReference>
<dbReference type="PDB" id="3TNH">
    <property type="method" value="X-ray"/>
    <property type="resolution" value="3.20 A"/>
    <property type="chains" value="B=1-259"/>
</dbReference>
<dbReference type="PDB" id="3TNI">
    <property type="method" value="X-ray"/>
    <property type="resolution" value="3.23 A"/>
    <property type="chains" value="B=1-259"/>
</dbReference>
<dbReference type="PDB" id="4BCF">
    <property type="method" value="X-ray"/>
    <property type="resolution" value="3.01 A"/>
    <property type="chains" value="B=2-259"/>
</dbReference>
<dbReference type="PDB" id="4BCG">
    <property type="method" value="X-ray"/>
    <property type="resolution" value="3.08 A"/>
    <property type="chains" value="B=2-259"/>
</dbReference>
<dbReference type="PDB" id="4BCH">
    <property type="method" value="X-ray"/>
    <property type="resolution" value="2.96 A"/>
    <property type="chains" value="B=2-259"/>
</dbReference>
<dbReference type="PDB" id="4BCI">
    <property type="method" value="X-ray"/>
    <property type="resolution" value="3.10 A"/>
    <property type="chains" value="B=2-259"/>
</dbReference>
<dbReference type="PDB" id="4BCJ">
    <property type="method" value="X-ray"/>
    <property type="resolution" value="3.16 A"/>
    <property type="chains" value="B=2-259"/>
</dbReference>
<dbReference type="PDB" id="4EC8">
    <property type="method" value="X-ray"/>
    <property type="resolution" value="3.60 A"/>
    <property type="chains" value="B=2-259"/>
</dbReference>
<dbReference type="PDB" id="4EC9">
    <property type="method" value="X-ray"/>
    <property type="resolution" value="3.21 A"/>
    <property type="chains" value="B=2-259"/>
</dbReference>
<dbReference type="PDB" id="4IMY">
    <property type="method" value="X-ray"/>
    <property type="resolution" value="2.94 A"/>
    <property type="chains" value="B/D/F=1-264"/>
</dbReference>
<dbReference type="PDB" id="4OGR">
    <property type="method" value="X-ray"/>
    <property type="resolution" value="3.00 A"/>
    <property type="chains" value="B/F/K=1-264"/>
</dbReference>
<dbReference type="PDB" id="4OR5">
    <property type="method" value="X-ray"/>
    <property type="resolution" value="2.90 A"/>
    <property type="chains" value="B/G=1-266"/>
</dbReference>
<dbReference type="PDB" id="5L1Z">
    <property type="method" value="X-ray"/>
    <property type="resolution" value="5.90 A"/>
    <property type="chains" value="B=1-264"/>
</dbReference>
<dbReference type="PDB" id="6CYT">
    <property type="method" value="X-ray"/>
    <property type="resolution" value="3.50 A"/>
    <property type="chains" value="B=1-264"/>
</dbReference>
<dbReference type="PDB" id="6GZH">
    <property type="method" value="X-ray"/>
    <property type="resolution" value="3.17 A"/>
    <property type="chains" value="B=1-726"/>
</dbReference>
<dbReference type="PDB" id="6W9E">
    <property type="method" value="X-ray"/>
    <property type="resolution" value="3.10 A"/>
    <property type="chains" value="B=1-259"/>
</dbReference>
<dbReference type="PDB" id="6Z45">
    <property type="method" value="X-ray"/>
    <property type="resolution" value="3.37 A"/>
    <property type="chains" value="B=2-259"/>
</dbReference>
<dbReference type="PDB" id="7NWK">
    <property type="method" value="X-ray"/>
    <property type="resolution" value="2.81 A"/>
    <property type="chains" value="B=2-259"/>
</dbReference>
<dbReference type="PDB" id="8I0L">
    <property type="method" value="X-ray"/>
    <property type="resolution" value="3.60 A"/>
    <property type="chains" value="B=2-259"/>
</dbReference>
<dbReference type="PDB" id="8K5R">
    <property type="method" value="X-ray"/>
    <property type="resolution" value="3.75 A"/>
    <property type="chains" value="B=1-259"/>
</dbReference>
<dbReference type="PDBsum" id="2PK2"/>
<dbReference type="PDBsum" id="3BLH"/>
<dbReference type="PDBsum" id="3BLQ"/>
<dbReference type="PDBsum" id="3BLR"/>
<dbReference type="PDBsum" id="3LQ5"/>
<dbReference type="PDBsum" id="3MI9"/>
<dbReference type="PDBsum" id="3MIA"/>
<dbReference type="PDBsum" id="3MY1"/>
<dbReference type="PDBsum" id="3TN8"/>
<dbReference type="PDBsum" id="3TNH"/>
<dbReference type="PDBsum" id="3TNI"/>
<dbReference type="PDBsum" id="4BCF"/>
<dbReference type="PDBsum" id="4BCG"/>
<dbReference type="PDBsum" id="4BCH"/>
<dbReference type="PDBsum" id="4BCI"/>
<dbReference type="PDBsum" id="4BCJ"/>
<dbReference type="PDBsum" id="4EC8"/>
<dbReference type="PDBsum" id="4EC9"/>
<dbReference type="PDBsum" id="4IMY"/>
<dbReference type="PDBsum" id="4OGR"/>
<dbReference type="PDBsum" id="4OR5"/>
<dbReference type="PDBsum" id="5L1Z"/>
<dbReference type="PDBsum" id="6CYT"/>
<dbReference type="PDBsum" id="6GZH"/>
<dbReference type="PDBsum" id="6W9E"/>
<dbReference type="PDBsum" id="6Z45"/>
<dbReference type="PDBsum" id="7NWK"/>
<dbReference type="PDBsum" id="8I0L"/>
<dbReference type="PDBsum" id="8K5R"/>
<dbReference type="SMR" id="O60563"/>
<dbReference type="BioGRID" id="107343">
    <property type="interactions" value="258"/>
</dbReference>
<dbReference type="ComplexPortal" id="CPX-222">
    <property type="entry name" value="Positive transcription elongation factor B, CDK9-cyclinT1 complex"/>
</dbReference>
<dbReference type="CORUM" id="O60563"/>
<dbReference type="DIP" id="DIP-29891N"/>
<dbReference type="FunCoup" id="O60563">
    <property type="interactions" value="3734"/>
</dbReference>
<dbReference type="IntAct" id="O60563">
    <property type="interactions" value="130"/>
</dbReference>
<dbReference type="MINT" id="O60563"/>
<dbReference type="STRING" id="9606.ENSP00000261900"/>
<dbReference type="BindingDB" id="O60563"/>
<dbReference type="ChEMBL" id="CHEMBL2108"/>
<dbReference type="GlyGen" id="O60563">
    <property type="glycosylation" value="3 sites, 1 O-linked glycan (1 site)"/>
</dbReference>
<dbReference type="iPTMnet" id="O60563"/>
<dbReference type="PhosphoSitePlus" id="O60563"/>
<dbReference type="BioMuta" id="CCNT1"/>
<dbReference type="CPTAC" id="CPTAC-2803"/>
<dbReference type="jPOST" id="O60563"/>
<dbReference type="MassIVE" id="O60563"/>
<dbReference type="PaxDb" id="9606-ENSP00000261900"/>
<dbReference type="PeptideAtlas" id="O60563"/>
<dbReference type="ProteomicsDB" id="2517"/>
<dbReference type="ProteomicsDB" id="49468">
    <molecule id="O60563-1"/>
</dbReference>
<dbReference type="Pumba" id="O60563"/>
<dbReference type="ABCD" id="O60563">
    <property type="antibodies" value="6 sequenced antibodies"/>
</dbReference>
<dbReference type="Antibodypedia" id="1442">
    <property type="antibodies" value="292 antibodies from 38 providers"/>
</dbReference>
<dbReference type="DNASU" id="904"/>
<dbReference type="Ensembl" id="ENST00000261900.8">
    <molecule id="O60563-1"/>
    <property type="protein sequence ID" value="ENSP00000261900.3"/>
    <property type="gene ID" value="ENSG00000129315.12"/>
</dbReference>
<dbReference type="Ensembl" id="ENST00000417344.2">
    <molecule id="O60563-2"/>
    <property type="protein sequence ID" value="ENSP00000399845.2"/>
    <property type="gene ID" value="ENSG00000129315.12"/>
</dbReference>
<dbReference type="Ensembl" id="ENST00000618666.4">
    <molecule id="O60563-2"/>
    <property type="protein sequence ID" value="ENSP00000481035.1"/>
    <property type="gene ID" value="ENSG00000129315.12"/>
</dbReference>
<dbReference type="GeneID" id="904"/>
<dbReference type="KEGG" id="hsa:904"/>
<dbReference type="MANE-Select" id="ENST00000261900.8">
    <property type="protein sequence ID" value="ENSP00000261900.3"/>
    <property type="RefSeq nucleotide sequence ID" value="NM_001240.4"/>
    <property type="RefSeq protein sequence ID" value="NP_001231.2"/>
</dbReference>
<dbReference type="UCSC" id="uc001rsd.5">
    <molecule id="O60563-1"/>
    <property type="organism name" value="human"/>
</dbReference>
<dbReference type="AGR" id="HGNC:1599"/>
<dbReference type="CTD" id="904"/>
<dbReference type="DisGeNET" id="904"/>
<dbReference type="GeneCards" id="CCNT1"/>
<dbReference type="HGNC" id="HGNC:1599">
    <property type="gene designation" value="CCNT1"/>
</dbReference>
<dbReference type="HPA" id="ENSG00000129315">
    <property type="expression patterns" value="Low tissue specificity"/>
</dbReference>
<dbReference type="MIM" id="143055">
    <property type="type" value="gene"/>
</dbReference>
<dbReference type="neXtProt" id="NX_O60563"/>
<dbReference type="OpenTargets" id="ENSG00000129315"/>
<dbReference type="PharmGKB" id="PA26163"/>
<dbReference type="VEuPathDB" id="HostDB:ENSG00000129315"/>
<dbReference type="eggNOG" id="KOG0834">
    <property type="taxonomic scope" value="Eukaryota"/>
</dbReference>
<dbReference type="GeneTree" id="ENSGT00940000159544"/>
<dbReference type="HOGENOM" id="CLU_022000_4_2_1"/>
<dbReference type="InParanoid" id="O60563"/>
<dbReference type="OMA" id="TWSGKGQ"/>
<dbReference type="OrthoDB" id="25002at2759"/>
<dbReference type="PAN-GO" id="O60563">
    <property type="GO annotations" value="5 GO annotations based on evolutionary models"/>
</dbReference>
<dbReference type="PhylomeDB" id="O60563"/>
<dbReference type="TreeFam" id="TF101014"/>
<dbReference type="PathwayCommons" id="O60563"/>
<dbReference type="Reactome" id="R-HSA-112382">
    <property type="pathway name" value="Formation of RNA Pol II elongation complex"/>
</dbReference>
<dbReference type="Reactome" id="R-HSA-167152">
    <property type="pathway name" value="Formation of HIV elongation complex in the absence of HIV Tat"/>
</dbReference>
<dbReference type="Reactome" id="R-HSA-167200">
    <property type="pathway name" value="Formation of HIV-1 elongation complex containing HIV-1 Tat"/>
</dbReference>
<dbReference type="Reactome" id="R-HSA-167238">
    <property type="pathway name" value="Pausing and recovery of Tat-mediated HIV elongation"/>
</dbReference>
<dbReference type="Reactome" id="R-HSA-167243">
    <property type="pathway name" value="Tat-mediated HIV elongation arrest and recovery"/>
</dbReference>
<dbReference type="Reactome" id="R-HSA-167246">
    <property type="pathway name" value="Tat-mediated elongation of the HIV-1 transcript"/>
</dbReference>
<dbReference type="Reactome" id="R-HSA-167287">
    <property type="pathway name" value="HIV elongation arrest and recovery"/>
</dbReference>
<dbReference type="Reactome" id="R-HSA-167290">
    <property type="pathway name" value="Pausing and recovery of HIV elongation"/>
</dbReference>
<dbReference type="Reactome" id="R-HSA-176034">
    <property type="pathway name" value="Interactions of Tat with host cellular proteins"/>
</dbReference>
<dbReference type="Reactome" id="R-HSA-2173796">
    <property type="pathway name" value="SMAD2/SMAD3:SMAD4 heterotrimer regulates transcription"/>
</dbReference>
<dbReference type="Reactome" id="R-HSA-674695">
    <property type="pathway name" value="RNA Polymerase II Pre-transcription Events"/>
</dbReference>
<dbReference type="Reactome" id="R-HSA-6796648">
    <property type="pathway name" value="TP53 Regulates Transcription of DNA Repair Genes"/>
</dbReference>
<dbReference type="Reactome" id="R-HSA-6807505">
    <property type="pathway name" value="RNA polymerase II transcribes snRNA genes"/>
</dbReference>
<dbReference type="Reactome" id="R-HSA-75955">
    <property type="pathway name" value="RNA Polymerase II Transcription Elongation"/>
</dbReference>
<dbReference type="Reactome" id="R-HSA-9018519">
    <property type="pathway name" value="Estrogen-dependent gene expression"/>
</dbReference>
<dbReference type="SignaLink" id="O60563"/>
<dbReference type="SIGNOR" id="O60563"/>
<dbReference type="BioGRID-ORCS" id="904">
    <property type="hits" value="39 hits in 1172 CRISPR screens"/>
</dbReference>
<dbReference type="CD-CODE" id="16670A7A">
    <property type="entry name" value="Synthetic Condensate 000207"/>
</dbReference>
<dbReference type="CD-CODE" id="38EC0B30">
    <property type="entry name" value="Transcriptional condensate"/>
</dbReference>
<dbReference type="CD-CODE" id="804901D1">
    <property type="entry name" value="Nuclear speckle"/>
</dbReference>
<dbReference type="CD-CODE" id="F4B231E0">
    <property type="entry name" value="Synthetic Condensate 000208"/>
</dbReference>
<dbReference type="ChiTaRS" id="CCNT1">
    <property type="organism name" value="human"/>
</dbReference>
<dbReference type="EvolutionaryTrace" id="O60563"/>
<dbReference type="GeneWiki" id="Cyclin_T1"/>
<dbReference type="GenomeRNAi" id="904"/>
<dbReference type="Pharos" id="O60563">
    <property type="development level" value="Tchem"/>
</dbReference>
<dbReference type="PRO" id="PR:O60563"/>
<dbReference type="Proteomes" id="UP000005640">
    <property type="component" value="Chromosome 12"/>
</dbReference>
<dbReference type="RNAct" id="O60563">
    <property type="molecule type" value="protein"/>
</dbReference>
<dbReference type="Bgee" id="ENSG00000129315">
    <property type="expression patterns" value="Expressed in sperm and 195 other cell types or tissues"/>
</dbReference>
<dbReference type="ExpressionAtlas" id="O60563">
    <property type="expression patterns" value="baseline and differential"/>
</dbReference>
<dbReference type="GO" id="GO:0008024">
    <property type="term" value="C:cyclin/CDK positive transcription elongation factor complex"/>
    <property type="evidence" value="ECO:0000314"/>
    <property type="project" value="UniProtKB"/>
</dbReference>
<dbReference type="GO" id="GO:0005829">
    <property type="term" value="C:cytosol"/>
    <property type="evidence" value="ECO:0000314"/>
    <property type="project" value="HPA"/>
</dbReference>
<dbReference type="GO" id="GO:0005654">
    <property type="term" value="C:nucleoplasm"/>
    <property type="evidence" value="ECO:0000314"/>
    <property type="project" value="HPA"/>
</dbReference>
<dbReference type="GO" id="GO:0005634">
    <property type="term" value="C:nucleus"/>
    <property type="evidence" value="ECO:0000314"/>
    <property type="project" value="UniProtKB"/>
</dbReference>
<dbReference type="GO" id="GO:0070691">
    <property type="term" value="C:P-TEFb complex"/>
    <property type="evidence" value="ECO:0000314"/>
    <property type="project" value="UniProtKB"/>
</dbReference>
<dbReference type="GO" id="GO:0097322">
    <property type="term" value="F:7SK snRNA binding"/>
    <property type="evidence" value="ECO:0000314"/>
    <property type="project" value="UniProtKB"/>
</dbReference>
<dbReference type="GO" id="GO:0003682">
    <property type="term" value="F:chromatin binding"/>
    <property type="evidence" value="ECO:0007669"/>
    <property type="project" value="Ensembl"/>
</dbReference>
<dbReference type="GO" id="GO:0061575">
    <property type="term" value="F:cyclin-dependent protein serine/threonine kinase activator activity"/>
    <property type="evidence" value="ECO:0000314"/>
    <property type="project" value="UniProtKB"/>
</dbReference>
<dbReference type="GO" id="GO:0003677">
    <property type="term" value="F:DNA binding"/>
    <property type="evidence" value="ECO:0000314"/>
    <property type="project" value="MGI"/>
</dbReference>
<dbReference type="GO" id="GO:0140297">
    <property type="term" value="F:DNA-binding transcription factor binding"/>
    <property type="evidence" value="ECO:0000353"/>
    <property type="project" value="ParkinsonsUK-UCL"/>
</dbReference>
<dbReference type="GO" id="GO:0140693">
    <property type="term" value="F:molecular condensate scaffold activity"/>
    <property type="evidence" value="ECO:0000314"/>
    <property type="project" value="UniProtKB"/>
</dbReference>
<dbReference type="GO" id="GO:0019901">
    <property type="term" value="F:protein kinase binding"/>
    <property type="evidence" value="ECO:0007669"/>
    <property type="project" value="Ensembl"/>
</dbReference>
<dbReference type="GO" id="GO:0070063">
    <property type="term" value="F:RNA polymerase binding"/>
    <property type="evidence" value="ECO:0000353"/>
    <property type="project" value="UniProtKB"/>
</dbReference>
<dbReference type="GO" id="GO:0000976">
    <property type="term" value="F:transcription cis-regulatory region binding"/>
    <property type="evidence" value="ECO:0007669"/>
    <property type="project" value="Ensembl"/>
</dbReference>
<dbReference type="GO" id="GO:0051301">
    <property type="term" value="P:cell division"/>
    <property type="evidence" value="ECO:0007669"/>
    <property type="project" value="UniProtKB-KW"/>
</dbReference>
<dbReference type="GO" id="GO:0043923">
    <property type="term" value="P:positive regulation by host of viral transcription"/>
    <property type="evidence" value="ECO:0000314"/>
    <property type="project" value="ComplexPortal"/>
</dbReference>
<dbReference type="GO" id="GO:0032786">
    <property type="term" value="P:positive regulation of DNA-templated transcription, elongation"/>
    <property type="evidence" value="ECO:0000318"/>
    <property type="project" value="GO_Central"/>
</dbReference>
<dbReference type="GO" id="GO:0045944">
    <property type="term" value="P:positive regulation of transcription by RNA polymerase II"/>
    <property type="evidence" value="ECO:0000314"/>
    <property type="project" value="UniProtKB"/>
</dbReference>
<dbReference type="GO" id="GO:0032968">
    <property type="term" value="P:positive regulation of transcription elongation by RNA polymerase II"/>
    <property type="evidence" value="ECO:0000314"/>
    <property type="project" value="UniProtKB"/>
</dbReference>
<dbReference type="GO" id="GO:0000079">
    <property type="term" value="P:regulation of cyclin-dependent protein serine/threonine kinase activity"/>
    <property type="evidence" value="ECO:0000304"/>
    <property type="project" value="ProtInc"/>
</dbReference>
<dbReference type="GO" id="GO:0009410">
    <property type="term" value="P:response to xenobiotic stimulus"/>
    <property type="evidence" value="ECO:0007669"/>
    <property type="project" value="Ensembl"/>
</dbReference>
<dbReference type="GO" id="GO:0006366">
    <property type="term" value="P:transcription by RNA polymerase II"/>
    <property type="evidence" value="ECO:0000304"/>
    <property type="project" value="ProtInc"/>
</dbReference>
<dbReference type="CDD" id="cd20595">
    <property type="entry name" value="CYCLIN_CCNT1_rpt1"/>
    <property type="match status" value="1"/>
</dbReference>
<dbReference type="CDD" id="cd20597">
    <property type="entry name" value="CYCLIN_CCNT1_rpt2"/>
    <property type="match status" value="1"/>
</dbReference>
<dbReference type="FunFam" id="1.10.472.10:FF:000004">
    <property type="entry name" value="Cyclin T2"/>
    <property type="match status" value="1"/>
</dbReference>
<dbReference type="FunFam" id="1.10.472.10:FF:000009">
    <property type="entry name" value="cyclin-T2 isoform X1"/>
    <property type="match status" value="1"/>
</dbReference>
<dbReference type="Gene3D" id="1.10.472.10">
    <property type="entry name" value="Cyclin-like"/>
    <property type="match status" value="2"/>
</dbReference>
<dbReference type="InterPro" id="IPR013763">
    <property type="entry name" value="Cyclin-like_dom"/>
</dbReference>
<dbReference type="InterPro" id="IPR036915">
    <property type="entry name" value="Cyclin-like_sf"/>
</dbReference>
<dbReference type="InterPro" id="IPR043198">
    <property type="entry name" value="Cyclin/Ssn8"/>
</dbReference>
<dbReference type="InterPro" id="IPR047320">
    <property type="entry name" value="CYCLIN_CCNT1_rpt2"/>
</dbReference>
<dbReference type="InterPro" id="IPR006671">
    <property type="entry name" value="Cyclin_N"/>
</dbReference>
<dbReference type="PANTHER" id="PTHR10026">
    <property type="entry name" value="CYCLIN"/>
    <property type="match status" value="1"/>
</dbReference>
<dbReference type="Pfam" id="PF00134">
    <property type="entry name" value="Cyclin_N"/>
    <property type="match status" value="1"/>
</dbReference>
<dbReference type="Pfam" id="PF21797">
    <property type="entry name" value="CycT2-like_C"/>
    <property type="match status" value="1"/>
</dbReference>
<dbReference type="SMART" id="SM00385">
    <property type="entry name" value="CYCLIN"/>
    <property type="match status" value="1"/>
</dbReference>
<dbReference type="SUPFAM" id="SSF47954">
    <property type="entry name" value="Cyclin-like"/>
    <property type="match status" value="2"/>
</dbReference>
<keyword id="KW-0002">3D-structure</keyword>
<keyword id="KW-0007">Acetylation</keyword>
<keyword id="KW-0013">ADP-ribosylation</keyword>
<keyword id="KW-0025">Alternative splicing</keyword>
<keyword id="KW-0131">Cell cycle</keyword>
<keyword id="KW-0132">Cell division</keyword>
<keyword id="KW-0175">Coiled coil</keyword>
<keyword id="KW-0195">Cyclin</keyword>
<keyword id="KW-0903">Direct protein sequencing</keyword>
<keyword id="KW-0945">Host-virus interaction</keyword>
<keyword id="KW-1017">Isopeptide bond</keyword>
<keyword id="KW-0539">Nucleus</keyword>
<keyword id="KW-0597">Phosphoprotein</keyword>
<keyword id="KW-1267">Proteomics identification</keyword>
<keyword id="KW-1185">Reference proteome</keyword>
<keyword id="KW-0804">Transcription</keyword>
<keyword id="KW-0805">Transcription regulation</keyword>
<keyword id="KW-0832">Ubl conjugation</keyword>
<name>CCNT1_HUMAN</name>
<feature type="chain" id="PRO_0000080491" description="Cyclin-T1">
    <location>
        <begin position="1"/>
        <end position="726"/>
    </location>
</feature>
<feature type="region of interest" description="Disordered" evidence="2">
    <location>
        <begin position="360"/>
        <end position="385"/>
    </location>
</feature>
<feature type="region of interest" description="Histidine-rich domain (HRD)" evidence="17 20">
    <location>
        <begin position="480"/>
        <end position="550"/>
    </location>
</feature>
<feature type="region of interest" description="Disordered" evidence="17">
    <location>
        <begin position="487"/>
        <end position="650"/>
    </location>
</feature>
<feature type="region of interest" description="Required for interaction with ZMYND8" evidence="18">
    <location>
        <begin position="527"/>
        <end position="570"/>
    </location>
</feature>
<feature type="region of interest" description="Disordered" evidence="2">
    <location>
        <begin position="688"/>
        <end position="726"/>
    </location>
</feature>
<feature type="coiled-coil region" evidence="1">
    <location>
        <begin position="384"/>
        <end position="425"/>
    </location>
</feature>
<feature type="short sequence motif" description="Nuclear localization signal, and interaction with Tat-TAR RNA" evidence="27">
    <location>
        <begin position="253"/>
        <end position="270"/>
    </location>
</feature>
<feature type="compositionally biased region" description="Polar residues" evidence="2">
    <location>
        <begin position="366"/>
        <end position="382"/>
    </location>
</feature>
<feature type="compositionally biased region" description="Basic and acidic residues" evidence="2">
    <location>
        <begin position="487"/>
        <end position="506"/>
    </location>
</feature>
<feature type="compositionally biased region" description="Basic residues" evidence="2">
    <location>
        <begin position="507"/>
        <end position="530"/>
    </location>
</feature>
<feature type="compositionally biased region" description="Low complexity" evidence="2">
    <location>
        <begin position="560"/>
        <end position="570"/>
    </location>
</feature>
<feature type="compositionally biased region" description="Low complexity" evidence="2">
    <location>
        <begin position="594"/>
        <end position="609"/>
    </location>
</feature>
<feature type="compositionally biased region" description="Polar residues" evidence="2">
    <location>
        <begin position="615"/>
        <end position="630"/>
    </location>
</feature>
<feature type="compositionally biased region" description="Pro residues" evidence="2">
    <location>
        <begin position="710"/>
        <end position="726"/>
    </location>
</feature>
<feature type="site" description="Essential for interacting with HIV-1 Tat">
    <location>
        <position position="261"/>
    </location>
</feature>
<feature type="modified residue" description="Phosphoserine" evidence="29">
    <location>
        <position position="117"/>
    </location>
</feature>
<feature type="modified residue" description="Phosphoserine" evidence="29 32">
    <location>
        <position position="340"/>
    </location>
</feature>
<feature type="modified residue" description="Phosphoserine" evidence="32">
    <location>
        <position position="388"/>
    </location>
</feature>
<feature type="modified residue" description="N6-acetyllysine" evidence="30">
    <location>
        <position position="390"/>
    </location>
</feature>
<feature type="modified residue" description="ADP-ribosylserine" evidence="20">
    <location>
        <position position="416"/>
    </location>
</feature>
<feature type="modified residue" description="ADP-ribosylserine" evidence="20">
    <location>
        <position position="474"/>
    </location>
</feature>
<feature type="modified residue" description="ADP-ribosylserine" evidence="20">
    <location>
        <position position="475"/>
    </location>
</feature>
<feature type="modified residue" description="N6-(ADP-ribosyl)lysine" evidence="20">
    <location>
        <position position="485"/>
    </location>
</feature>
<feature type="modified residue" description="ADP-ribosylhistidine" evidence="20">
    <location>
        <position position="487"/>
    </location>
</feature>
<feature type="modified residue" description="Phosphoserine" evidence="28">
    <location>
        <position position="495"/>
    </location>
</feature>
<feature type="modified residue" description="Phosphoserine" evidence="31">
    <location>
        <position position="499"/>
    </location>
</feature>
<feature type="modified residue" description="ADP-ribosylhistidine" evidence="20">
    <location>
        <position position="530"/>
    </location>
</feature>
<feature type="modified residue" description="ADP-ribosylserine" evidence="20">
    <location>
        <position position="531"/>
    </location>
</feature>
<feature type="modified residue" description="ADP-ribosylserine" evidence="20">
    <location>
        <position position="549"/>
    </location>
</feature>
<feature type="modified residue" description="ADP-ribosylserine" evidence="20">
    <location>
        <position position="552"/>
    </location>
</feature>
<feature type="modified residue" description="ADP-ribosylhistidine" evidence="20">
    <location>
        <position position="556"/>
    </location>
</feature>
<feature type="modified residue" description="ADP-ribosylserine" evidence="20">
    <location>
        <position position="563"/>
    </location>
</feature>
<feature type="modified residue" description="Phosphoserine" evidence="32">
    <location>
        <position position="564"/>
    </location>
</feature>
<feature type="modified residue" description="Phosphoserine" evidence="28 32">
    <location>
        <position position="577"/>
    </location>
</feature>
<feature type="modified residue" description="ADP-ribosylserine" evidence="20">
    <location>
        <position position="637"/>
    </location>
</feature>
<feature type="cross-link" description="Glycyl lysine isopeptide (Lys-Gly) (interchain with G-Cter in SUMO2)" evidence="33">
    <location>
        <position position="342"/>
    </location>
</feature>
<feature type="cross-link" description="Glycyl lysine isopeptide (Lys-Gly) (interchain with G-Cter in SUMO2)" evidence="33">
    <location>
        <position position="415"/>
    </location>
</feature>
<feature type="cross-link" description="Glycyl lysine isopeptide (Lys-Gly) (interchain with G-Cter in SUMO2)" evidence="33">
    <location>
        <position position="481"/>
    </location>
</feature>
<feature type="splice variant" id="VSP_054569" description="In isoform 2." evidence="25">
    <original>SLHL</original>
    <variation>RTDT</variation>
    <location>
        <begin position="181"/>
        <end position="184"/>
    </location>
</feature>
<feature type="splice variant" id="VSP_054570" description="In isoform 2." evidence="25">
    <location>
        <begin position="185"/>
        <end position="726"/>
    </location>
</feature>
<feature type="sequence variant" id="VAR_053054" description="In dbSNP:rs17123261.">
    <original>H</original>
    <variation>R</variation>
    <location>
        <position position="362"/>
    </location>
</feature>
<feature type="sequence variant" id="VAR_069400" description="In dbSNP:rs201951577." evidence="13">
    <original>R</original>
    <variation>C</variation>
    <location>
        <position position="541"/>
    </location>
</feature>
<feature type="mutagenesis site" description="Loss of HIV-1 Tat transactivation." evidence="4">
    <original>C</original>
    <variation>Y</variation>
    <location>
        <position position="261"/>
    </location>
</feature>
<feature type="mutagenesis site" description="In mutant 9A; impaired formation of phase-separated liquid droplets, leading to decreased ability to activate CDK9." evidence="17">
    <original>HHHHHNHHSHK</original>
    <variation>AAAAANAASAKA</variation>
    <location>
        <begin position="517"/>
        <end position="527"/>
    </location>
</feature>
<feature type="sequence conflict" description="In Ref. 2; AAC39664." evidence="26" ref="2">
    <original>Q</original>
    <variation>R</variation>
    <location>
        <position position="77"/>
    </location>
</feature>
<feature type="turn" evidence="36">
    <location>
        <begin position="8"/>
        <end position="12"/>
    </location>
</feature>
<feature type="helix" evidence="36">
    <location>
        <begin position="16"/>
        <end position="20"/>
    </location>
</feature>
<feature type="helix" evidence="36">
    <location>
        <begin position="25"/>
        <end position="27"/>
    </location>
</feature>
<feature type="helix" evidence="36">
    <location>
        <begin position="31"/>
        <end position="52"/>
    </location>
</feature>
<feature type="helix" evidence="36">
    <location>
        <begin position="56"/>
        <end position="69"/>
    </location>
</feature>
<feature type="turn" evidence="36">
    <location>
        <begin position="70"/>
        <end position="72"/>
    </location>
</feature>
<feature type="turn" evidence="36">
    <location>
        <begin position="75"/>
        <end position="77"/>
    </location>
</feature>
<feature type="helix" evidence="36">
    <location>
        <begin position="80"/>
        <end position="94"/>
    </location>
</feature>
<feature type="helix" evidence="36">
    <location>
        <begin position="101"/>
        <end position="112"/>
    </location>
</feature>
<feature type="strand" evidence="36">
    <location>
        <begin position="114"/>
        <end position="116"/>
    </location>
</feature>
<feature type="helix" evidence="36">
    <location>
        <begin position="124"/>
        <end position="143"/>
    </location>
</feature>
<feature type="turn" evidence="36">
    <location>
        <begin position="144"/>
        <end position="146"/>
    </location>
</feature>
<feature type="helix" evidence="36">
    <location>
        <begin position="153"/>
        <end position="163"/>
    </location>
</feature>
<feature type="helix" evidence="36">
    <location>
        <begin position="168"/>
        <end position="184"/>
    </location>
</feature>
<feature type="helix" evidence="36">
    <location>
        <begin position="187"/>
        <end position="189"/>
    </location>
</feature>
<feature type="helix" evidence="36">
    <location>
        <begin position="193"/>
        <end position="207"/>
    </location>
</feature>
<feature type="strand" evidence="34">
    <location>
        <begin position="216"/>
        <end position="218"/>
    </location>
</feature>
<feature type="helix" evidence="36">
    <location>
        <begin position="221"/>
        <end position="224"/>
    </location>
</feature>
<feature type="helix" evidence="36">
    <location>
        <begin position="231"/>
        <end position="246"/>
    </location>
</feature>
<feature type="helix" evidence="36">
    <location>
        <begin position="249"/>
        <end position="251"/>
    </location>
</feature>
<feature type="helix" evidence="35">
    <location>
        <begin position="252"/>
        <end position="255"/>
    </location>
</feature>
<feature type="turn" evidence="34">
    <location>
        <begin position="258"/>
        <end position="262"/>
    </location>
</feature>
<reference key="1">
    <citation type="journal article" date="1998" name="Cell">
        <title>A novel CDK9-associated C-type cyclin interacts directly with HIV-1 Tat and mediates its high-affinity, loop-specific binding to TAR RNA.</title>
        <authorList>
            <person name="Wei P."/>
            <person name="Garber M.E."/>
            <person name="Fang S.-M."/>
            <person name="Fischer W.H."/>
            <person name="Jones K.A."/>
        </authorList>
    </citation>
    <scope>NUCLEOTIDE SEQUENCE [MRNA] (ISOFORM 1)</scope>
    <scope>PARTIAL PROTEIN SEQUENCE</scope>
    <scope>INTERACTION WITH HIV-1 TAT (MICROBIAL INFECTION)</scope>
    <source>
        <tissue>T-cell lymphoma</tissue>
    </source>
</reference>
<reference key="2">
    <citation type="journal article" date="1998" name="Genes Dev.">
        <title>Identification of multiple cyclin subunits of human P-TEFb.</title>
        <authorList>
            <person name="Peng J.-M."/>
            <person name="Zhu Y."/>
            <person name="Milton J.T."/>
            <person name="Price D.H."/>
        </authorList>
    </citation>
    <scope>NUCLEOTIDE SEQUENCE [MRNA] (ISOFORM 1)</scope>
    <scope>TISSUE SPECIFICITY</scope>
    <scope>IDENTIFICATION IN THE P-TEFB COMPLEX</scope>
    <source>
        <tissue>Mammary cancer</tissue>
    </source>
</reference>
<reference key="3">
    <citation type="submission" date="2007-06" db="EMBL/GenBank/DDBJ databases">
        <authorList>
            <person name="Wu X."/>
            <person name="Liu Q."/>
            <person name="Guo D."/>
        </authorList>
    </citation>
    <scope>NUCLEOTIDE SEQUENCE [MRNA] (ISOFORM 2)</scope>
</reference>
<reference key="4">
    <citation type="journal article" date="2006" name="Nature">
        <title>The finished DNA sequence of human chromosome 12.</title>
        <authorList>
            <person name="Scherer S.E."/>
            <person name="Muzny D.M."/>
            <person name="Buhay C.J."/>
            <person name="Chen R."/>
            <person name="Cree A."/>
            <person name="Ding Y."/>
            <person name="Dugan-Rocha S."/>
            <person name="Gill R."/>
            <person name="Gunaratne P."/>
            <person name="Harris R.A."/>
            <person name="Hawes A.C."/>
            <person name="Hernandez J."/>
            <person name="Hodgson A.V."/>
            <person name="Hume J."/>
            <person name="Jackson A."/>
            <person name="Khan Z.M."/>
            <person name="Kovar-Smith C."/>
            <person name="Lewis L.R."/>
            <person name="Lozado R.J."/>
            <person name="Metzker M.L."/>
            <person name="Milosavljevic A."/>
            <person name="Miner G.R."/>
            <person name="Montgomery K.T."/>
            <person name="Morgan M.B."/>
            <person name="Nazareth L.V."/>
            <person name="Scott G."/>
            <person name="Sodergren E."/>
            <person name="Song X.-Z."/>
            <person name="Steffen D."/>
            <person name="Lovering R.C."/>
            <person name="Wheeler D.A."/>
            <person name="Worley K.C."/>
            <person name="Yuan Y."/>
            <person name="Zhang Z."/>
            <person name="Adams C.Q."/>
            <person name="Ansari-Lari M.A."/>
            <person name="Ayele M."/>
            <person name="Brown M.J."/>
            <person name="Chen G."/>
            <person name="Chen Z."/>
            <person name="Clerc-Blankenburg K.P."/>
            <person name="Davis C."/>
            <person name="Delgado O."/>
            <person name="Dinh H.H."/>
            <person name="Draper H."/>
            <person name="Gonzalez-Garay M.L."/>
            <person name="Havlak P."/>
            <person name="Jackson L.R."/>
            <person name="Jacob L.S."/>
            <person name="Kelly S.H."/>
            <person name="Li L."/>
            <person name="Li Z."/>
            <person name="Liu J."/>
            <person name="Liu W."/>
            <person name="Lu J."/>
            <person name="Maheshwari M."/>
            <person name="Nguyen B.-V."/>
            <person name="Okwuonu G.O."/>
            <person name="Pasternak S."/>
            <person name="Perez L.M."/>
            <person name="Plopper F.J.H."/>
            <person name="Santibanez J."/>
            <person name="Shen H."/>
            <person name="Tabor P.E."/>
            <person name="Verduzco D."/>
            <person name="Waldron L."/>
            <person name="Wang Q."/>
            <person name="Williams G.A."/>
            <person name="Zhang J."/>
            <person name="Zhou J."/>
            <person name="Allen C.C."/>
            <person name="Amin A.G."/>
            <person name="Anyalebechi V."/>
            <person name="Bailey M."/>
            <person name="Barbaria J.A."/>
            <person name="Bimage K.E."/>
            <person name="Bryant N.P."/>
            <person name="Burch P.E."/>
            <person name="Burkett C.E."/>
            <person name="Burrell K.L."/>
            <person name="Calderon E."/>
            <person name="Cardenas V."/>
            <person name="Carter K."/>
            <person name="Casias K."/>
            <person name="Cavazos I."/>
            <person name="Cavazos S.R."/>
            <person name="Ceasar H."/>
            <person name="Chacko J."/>
            <person name="Chan S.N."/>
            <person name="Chavez D."/>
            <person name="Christopoulos C."/>
            <person name="Chu J."/>
            <person name="Cockrell R."/>
            <person name="Cox C.D."/>
            <person name="Dang M."/>
            <person name="Dathorne S.R."/>
            <person name="David R."/>
            <person name="Davis C.M."/>
            <person name="Davy-Carroll L."/>
            <person name="Deshazo D.R."/>
            <person name="Donlin J.E."/>
            <person name="D'Souza L."/>
            <person name="Eaves K.A."/>
            <person name="Egan A."/>
            <person name="Emery-Cohen A.J."/>
            <person name="Escotto M."/>
            <person name="Flagg N."/>
            <person name="Forbes L.D."/>
            <person name="Gabisi A.M."/>
            <person name="Garza M."/>
            <person name="Hamilton C."/>
            <person name="Henderson N."/>
            <person name="Hernandez O."/>
            <person name="Hines S."/>
            <person name="Hogues M.E."/>
            <person name="Huang M."/>
            <person name="Idlebird D.G."/>
            <person name="Johnson R."/>
            <person name="Jolivet A."/>
            <person name="Jones S."/>
            <person name="Kagan R."/>
            <person name="King L.M."/>
            <person name="Leal B."/>
            <person name="Lebow H."/>
            <person name="Lee S."/>
            <person name="LeVan J.M."/>
            <person name="Lewis L.C."/>
            <person name="London P."/>
            <person name="Lorensuhewa L.M."/>
            <person name="Loulseged H."/>
            <person name="Lovett D.A."/>
            <person name="Lucier A."/>
            <person name="Lucier R.L."/>
            <person name="Ma J."/>
            <person name="Madu R.C."/>
            <person name="Mapua P."/>
            <person name="Martindale A.D."/>
            <person name="Martinez E."/>
            <person name="Massey E."/>
            <person name="Mawhiney S."/>
            <person name="Meador M.G."/>
            <person name="Mendez S."/>
            <person name="Mercado C."/>
            <person name="Mercado I.C."/>
            <person name="Merritt C.E."/>
            <person name="Miner Z.L."/>
            <person name="Minja E."/>
            <person name="Mitchell T."/>
            <person name="Mohabbat F."/>
            <person name="Mohabbat K."/>
            <person name="Montgomery B."/>
            <person name="Moore N."/>
            <person name="Morris S."/>
            <person name="Munidasa M."/>
            <person name="Ngo R.N."/>
            <person name="Nguyen N.B."/>
            <person name="Nickerson E."/>
            <person name="Nwaokelemeh O.O."/>
            <person name="Nwokenkwo S."/>
            <person name="Obregon M."/>
            <person name="Oguh M."/>
            <person name="Oragunye N."/>
            <person name="Oviedo R.J."/>
            <person name="Parish B.J."/>
            <person name="Parker D.N."/>
            <person name="Parrish J."/>
            <person name="Parks K.L."/>
            <person name="Paul H.A."/>
            <person name="Payton B.A."/>
            <person name="Perez A."/>
            <person name="Perrin W."/>
            <person name="Pickens A."/>
            <person name="Primus E.L."/>
            <person name="Pu L.-L."/>
            <person name="Puazo M."/>
            <person name="Quiles M.M."/>
            <person name="Quiroz J.B."/>
            <person name="Rabata D."/>
            <person name="Reeves K."/>
            <person name="Ruiz S.J."/>
            <person name="Shao H."/>
            <person name="Sisson I."/>
            <person name="Sonaike T."/>
            <person name="Sorelle R.P."/>
            <person name="Sutton A.E."/>
            <person name="Svatek A.F."/>
            <person name="Svetz L.A."/>
            <person name="Tamerisa K.S."/>
            <person name="Taylor T.R."/>
            <person name="Teague B."/>
            <person name="Thomas N."/>
            <person name="Thorn R.D."/>
            <person name="Trejos Z.Y."/>
            <person name="Trevino B.K."/>
            <person name="Ukegbu O.N."/>
            <person name="Urban J.B."/>
            <person name="Vasquez L.I."/>
            <person name="Vera V.A."/>
            <person name="Villasana D.M."/>
            <person name="Wang L."/>
            <person name="Ward-Moore S."/>
            <person name="Warren J.T."/>
            <person name="Wei X."/>
            <person name="White F."/>
            <person name="Williamson A.L."/>
            <person name="Wleczyk R."/>
            <person name="Wooden H.S."/>
            <person name="Wooden S.H."/>
            <person name="Yen J."/>
            <person name="Yoon L."/>
            <person name="Yoon V."/>
            <person name="Zorrilla S.E."/>
            <person name="Nelson D."/>
            <person name="Kucherlapati R."/>
            <person name="Weinstock G."/>
            <person name="Gibbs R.A."/>
        </authorList>
    </citation>
    <scope>NUCLEOTIDE SEQUENCE [LARGE SCALE GENOMIC DNA]</scope>
</reference>
<reference key="5">
    <citation type="journal article" date="1999" name="EMBO J.">
        <title>A novel RNA polymerase II-containing complex potentiates Tat-enhanced HIV-1 transcription.</title>
        <authorList>
            <person name="Parada C.A."/>
            <person name="Roeder R.G."/>
        </authorList>
    </citation>
    <scope>IDENTIFICATION IN A COMPLEX WITH HTATSF1; CDK9; RNA POL II; SUPT5H AND NCL</scope>
</reference>
<reference key="6">
    <citation type="journal article" date="1999" name="J. Mol. Biol.">
        <title>Cyclin T1 domains involved in complex formation with Tat and TAR RNA are critical for tat-activation.</title>
        <authorList>
            <person name="Ivanov D."/>
            <person name="Kwak Y.T."/>
            <person name="Nee E."/>
            <person name="Guo J."/>
            <person name="Garcia-Martinez L.F."/>
            <person name="Gaynor R.B."/>
        </authorList>
    </citation>
    <scope>INTERACTION WITH HIV-1 TAT (MICROBIAL INFECTION)</scope>
    <scope>FUNCTION (MICROBIAL INFECTION)</scope>
</reference>
<reference key="7">
    <citation type="journal article" date="1999" name="J. Mol. Biol.">
        <title>Role of the human and murine cyclin T proteins in regulating HIV-1 Tat-activation.</title>
        <authorList>
            <person name="Kwak Y.T."/>
            <person name="Ivanov D."/>
            <person name="Guo J."/>
            <person name="Nee E."/>
            <person name="Gaynor R.B."/>
        </authorList>
    </citation>
    <scope>MUTAGENESIS OF CYS-261</scope>
    <scope>FUNCTION (MICROBIAL INFECTION)</scope>
    <scope>INTERACTION WITH HIV-1 TAT (MICROBIAL INFECTION)</scope>
</reference>
<reference key="8">
    <citation type="journal article" date="1998" name="Genes Dev.">
        <title>The interaction between HIV-1 Tat and human cyclin T1 requires zinc and a critical cysteine residue that is not conserved in the murine CycT1 protein.</title>
        <authorList>
            <person name="Garber M.E."/>
            <person name="Wei P."/>
            <person name="KewalRamani V.N."/>
            <person name="Mayall T.P."/>
            <person name="Herrmann C.H."/>
            <person name="Rice A.P."/>
            <person name="Littman D.R."/>
            <person name="Jones K.A."/>
        </authorList>
    </citation>
    <scope>INTERACTION WITH HIV-1 TAT (MICROBIAL INFECTION)</scope>
    <scope>ROLE OF CYS-261</scope>
</reference>
<reference key="9">
    <citation type="journal article" date="1999" name="J. Virol.">
        <title>Analysis of the effect of natural sequence variation in Tat and in cyclin T on the formation and RNA binding properties of Tat-cyclin T complexes.</title>
        <authorList>
            <person name="Bieniasz P.D."/>
            <person name="Grdina T.A."/>
            <person name="Bogerd H.P."/>
            <person name="Cullen B.R."/>
        </authorList>
    </citation>
    <scope>INTERACTION WITH HIV-1 TAT; HIV-2 TAT AND SIV TAT (MICROBIAL INFECTION)</scope>
</reference>
<reference key="10">
    <citation type="journal article" date="2000" name="Mol. Cell. Biol.">
        <title>Relief of two built-In autoinhibitory mechanisms in P-TEFb is required for assembly of a multicomponent transcription elongation complex at the human immunodeficiency virus type 1 promoter.</title>
        <authorList>
            <person name="Fong Y.W."/>
            <person name="Zhou Q."/>
        </authorList>
    </citation>
    <scope>INTERACTION WITH HTATSF1</scope>
</reference>
<reference key="11">
    <citation type="journal article" date="2002" name="J. Biomed. Sci.">
        <title>MCEF, the newest member of the AF4 family of transcription factors involved in leukemia, is a positive transcription elongation factor-b-associated protein.</title>
        <authorList>
            <person name="Estable M.C."/>
            <person name="Naghavi M.H."/>
            <person name="Kato H."/>
            <person name="Xiao H."/>
            <person name="Qin J."/>
            <person name="Vahlne A."/>
            <person name="Roeder R.G."/>
        </authorList>
    </citation>
    <scope>INTERACTION WITH AFF4</scope>
</reference>
<reference key="12">
    <citation type="journal article" date="2003" name="Mol. Cell. Biol.">
        <title>The human I-mfa domain-containing protein, HIC, interacts with cyclin T1 and modulates P-TEFb-dependent transcription.</title>
        <authorList>
            <person name="Young T.M."/>
            <person name="Wang Q."/>
            <person name="Pe'ery T."/>
            <person name="Mathews M.B."/>
        </authorList>
    </citation>
    <scope>INTERACTION WITH MDFIC</scope>
    <scope>SUBCELLULAR LOCATION</scope>
</reference>
<reference key="13">
    <citation type="journal article" date="2004" name="Virology">
        <title>Evidence for conformational flexibility in the Tat-TAR recognition motif of cyclin T1.</title>
        <authorList>
            <person name="Das C."/>
            <person name="Edgcomb S.P."/>
            <person name="Peteranderl R."/>
            <person name="Chen L."/>
            <person name="Frankel A.D."/>
        </authorList>
    </citation>
    <scope>CHARACTERIZATION</scope>
</reference>
<reference key="14">
    <citation type="journal article" date="2005" name="Mol. Cell">
        <title>The bromodomain protein Brd4 is a positive regulatory component of P-TEFb and stimulates RNA polymerase II-dependent transcription.</title>
        <authorList>
            <person name="Jang M.K."/>
            <person name="Mochizuki K."/>
            <person name="Zhou M."/>
            <person name="Jeong H.S."/>
            <person name="Brady J.N."/>
            <person name="Ozato K."/>
        </authorList>
    </citation>
    <scope>FUNCTION</scope>
    <scope>INTERACTION WITH BRD4</scope>
</reference>
<reference key="15">
    <citation type="journal article" date="2005" name="Mol. Cell">
        <title>Recruitment of P-TEFb for stimulation of transcriptional elongation by the bromodomain protein Brd4.</title>
        <authorList>
            <person name="Yang Z."/>
            <person name="Yik J.H."/>
            <person name="Chen R."/>
            <person name="He N."/>
            <person name="Jang M.K."/>
            <person name="Ozato K."/>
            <person name="Zhou Q."/>
        </authorList>
    </citation>
    <scope>FUNCTION</scope>
    <scope>INTERACTION WITH BRD4</scope>
</reference>
<reference key="16">
    <citation type="journal article" date="2007" name="Mol. Cell">
        <title>Systematic analysis of the protein interaction network for the human transcription machinery reveals the identity of the 7SK capping enzyme.</title>
        <authorList>
            <person name="Jeronimo C."/>
            <person name="Forget D."/>
            <person name="Bouchard A."/>
            <person name="Li Q."/>
            <person name="Chua G."/>
            <person name="Poitras C."/>
            <person name="Therien C."/>
            <person name="Bergeron D."/>
            <person name="Bourassa S."/>
            <person name="Greenblatt J."/>
            <person name="Chabot B."/>
            <person name="Poirier G.G."/>
            <person name="Hughes T.R."/>
            <person name="Blanchette M."/>
            <person name="Price D.H."/>
            <person name="Coulombe B."/>
        </authorList>
    </citation>
    <scope>IDENTIFICATION IN THE 7SK SNRNP COMPLEX</scope>
</reference>
<reference key="17">
    <citation type="journal article" date="2008" name="Mol. Cell">
        <title>Kinase-selective enrichment enables quantitative phosphoproteomics of the kinome across the cell cycle.</title>
        <authorList>
            <person name="Daub H."/>
            <person name="Olsen J.V."/>
            <person name="Bairlein M."/>
            <person name="Gnad F."/>
            <person name="Oppermann F.S."/>
            <person name="Korner R."/>
            <person name="Greff Z."/>
            <person name="Keri G."/>
            <person name="Stemmann O."/>
            <person name="Mann M."/>
        </authorList>
    </citation>
    <scope>PHOSPHORYLATION [LARGE SCALE ANALYSIS] AT SER-495 AND SER-577</scope>
    <scope>IDENTIFICATION BY MASS SPECTROMETRY [LARGE SCALE ANALYSIS]</scope>
    <source>
        <tissue>Cervix carcinoma</tissue>
    </source>
</reference>
<reference key="18">
    <citation type="journal article" date="2009" name="Mol. Cell. Proteomics">
        <title>Large-scale proteomics analysis of the human kinome.</title>
        <authorList>
            <person name="Oppermann F.S."/>
            <person name="Gnad F."/>
            <person name="Olsen J.V."/>
            <person name="Hornberger R."/>
            <person name="Greff Z."/>
            <person name="Keri G."/>
            <person name="Mann M."/>
            <person name="Daub H."/>
        </authorList>
    </citation>
    <scope>PHOSPHORYLATION [LARGE SCALE ANALYSIS] AT SER-117 AND SER-340</scope>
    <scope>IDENTIFICATION BY MASS SPECTROMETRY [LARGE SCALE ANALYSIS]</scope>
</reference>
<reference key="19">
    <citation type="journal article" date="2009" name="Science">
        <title>Lysine acetylation targets protein complexes and co-regulates major cellular functions.</title>
        <authorList>
            <person name="Choudhary C."/>
            <person name="Kumar C."/>
            <person name="Gnad F."/>
            <person name="Nielsen M.L."/>
            <person name="Rehman M."/>
            <person name="Walther T.C."/>
            <person name="Olsen J.V."/>
            <person name="Mann M."/>
        </authorList>
    </citation>
    <scope>ACETYLATION [LARGE SCALE ANALYSIS] AT LYS-390</scope>
    <scope>IDENTIFICATION BY MASS SPECTROMETRY [LARGE SCALE ANALYSIS]</scope>
</reference>
<reference key="20">
    <citation type="journal article" date="2010" name="Sci. Signal.">
        <title>Quantitative phosphoproteomics reveals widespread full phosphorylation site occupancy during mitosis.</title>
        <authorList>
            <person name="Olsen J.V."/>
            <person name="Vermeulen M."/>
            <person name="Santamaria A."/>
            <person name="Kumar C."/>
            <person name="Miller M.L."/>
            <person name="Jensen L.J."/>
            <person name="Gnad F."/>
            <person name="Cox J."/>
            <person name="Jensen T.S."/>
            <person name="Nigg E.A."/>
            <person name="Brunak S."/>
            <person name="Mann M."/>
        </authorList>
    </citation>
    <scope>PHOSPHORYLATION [LARGE SCALE ANALYSIS] AT SER-499</scope>
    <scope>IDENTIFICATION BY MASS SPECTROMETRY [LARGE SCALE ANALYSIS]</scope>
    <source>
        <tissue>Cervix carcinoma</tissue>
    </source>
</reference>
<reference key="21">
    <citation type="journal article" date="2011" name="BMC Syst. Biol.">
        <title>Initial characterization of the human central proteome.</title>
        <authorList>
            <person name="Burkard T.R."/>
            <person name="Planyavsky M."/>
            <person name="Kaupe I."/>
            <person name="Breitwieser F.P."/>
            <person name="Buerckstuemmer T."/>
            <person name="Bennett K.L."/>
            <person name="Superti-Furga G."/>
            <person name="Colinge J."/>
        </authorList>
    </citation>
    <scope>IDENTIFICATION BY MASS SPECTROMETRY [LARGE SCALE ANALYSIS]</scope>
</reference>
<reference key="22">
    <citation type="journal article" date="2013" name="Cell">
        <title>Brd4 and JMJD6-associated anti-pause enhancers in regulation of transcriptional pause release.</title>
        <authorList>
            <person name="Liu W."/>
            <person name="Ma Q."/>
            <person name="Wong K."/>
            <person name="Li W."/>
            <person name="Ohgi K."/>
            <person name="Zhang J."/>
            <person name="Aggarwal A."/>
            <person name="Rosenfeld M.G."/>
        </authorList>
    </citation>
    <scope>INTERACTION WITH BRD4 AND JMJD6</scope>
</reference>
<reference key="23">
    <citation type="journal article" date="2013" name="J. Proteome Res.">
        <title>Toward a comprehensive characterization of a human cancer cell phosphoproteome.</title>
        <authorList>
            <person name="Zhou H."/>
            <person name="Di Palma S."/>
            <person name="Preisinger C."/>
            <person name="Peng M."/>
            <person name="Polat A.N."/>
            <person name="Heck A.J."/>
            <person name="Mohammed S."/>
        </authorList>
    </citation>
    <scope>PHOSPHORYLATION [LARGE SCALE ANALYSIS] AT SER-340; SER-388; SER-564 AND SER-577</scope>
    <scope>IDENTIFICATION BY MASS SPECTROMETRY [LARGE SCALE ANALYSIS]</scope>
    <source>
        <tissue>Cervix carcinoma</tissue>
        <tissue>Erythroleukemia</tissue>
    </source>
</reference>
<reference key="24">
    <citation type="journal article" date="2016" name="Cell Rep.">
        <title>T-bet activates Th1 genes through mediator and the super elongation complex.</title>
        <authorList>
            <person name="Hertweck A."/>
            <person name="Evans C.M."/>
            <person name="Eskandarpour M."/>
            <person name="Lau J.C."/>
            <person name="Oleinika K."/>
            <person name="Jackson I."/>
            <person name="Kelly A."/>
            <person name="Ambrose J."/>
            <person name="Adamson P."/>
            <person name="Cousins D.J."/>
            <person name="Lavender P."/>
            <person name="Calder V.L."/>
            <person name="Lord G.M."/>
            <person name="Jenner R.G."/>
        </authorList>
    </citation>
    <scope>INTERACTION WITH TBX21</scope>
</reference>
<reference key="25">
    <citation type="journal article" date="2016" name="Sci. Rep.">
        <title>Heat shock factor 1 mediates latent HIV reactivation.</title>
        <authorList>
            <person name="Pan X.Y."/>
            <person name="Zhao W."/>
            <person name="Zeng X.Y."/>
            <person name="Lin J."/>
            <person name="Li M.M."/>
            <person name="Shen X.T."/>
            <person name="Liu S.W."/>
        </authorList>
    </citation>
    <scope>INTERACTION WITH HSF1</scope>
</reference>
<reference key="26">
    <citation type="journal article" date="2017" name="Nat. Struct. Mol. Biol.">
        <title>Site-specific mapping of the human SUMO proteome reveals co-modification with phosphorylation.</title>
        <authorList>
            <person name="Hendriks I.A."/>
            <person name="Lyon D."/>
            <person name="Young C."/>
            <person name="Jensen L.J."/>
            <person name="Vertegaal A.C."/>
            <person name="Nielsen M.L."/>
        </authorList>
    </citation>
    <scope>SUMOYLATION [LARGE SCALE ANALYSIS] AT LYS-342; LYS-415 AND LYS-481</scope>
    <scope>IDENTIFICATION BY MASS SPECTROMETRY [LARGE SCALE ANALYSIS]</scope>
</reference>
<reference key="27">
    <citation type="journal article" date="2018" name="Cell Rep.">
        <title>Positive Regulation of Transcription by Human ZMYND8 through Its Association with P-TEFb Complex.</title>
        <authorList>
            <person name="Ghosh K."/>
            <person name="Tang M."/>
            <person name="Kumari N."/>
            <person name="Nandy A."/>
            <person name="Basu S."/>
            <person name="Mall D.P."/>
            <person name="Rai K."/>
            <person name="Biswas D."/>
        </authorList>
    </citation>
    <scope>FUNCTION</scope>
    <scope>INTERACTION WITH CDK9 AND ZMYND8</scope>
    <scope>IDENTIFICATION BY MASS SPECTROMETRY</scope>
</reference>
<reference key="28">
    <citation type="journal article" date="2018" name="Nature">
        <title>Phase-separation mechanism for C-terminal hyperphosphorylation of RNA polymerase II.</title>
        <authorList>
            <person name="Lu H."/>
            <person name="Yu D."/>
            <person name="Hansen A.S."/>
            <person name="Ganguly S."/>
            <person name="Liu R."/>
            <person name="Heckert A."/>
            <person name="Darzacq X."/>
            <person name="Zhou Q."/>
        </authorList>
    </citation>
    <scope>FUNCTION</scope>
    <scope>SUBCELLULAR LOCATION</scope>
    <scope>DOMAIN</scope>
    <scope>MUTAGENESIS OF 517-HIS--LYS-527</scope>
</reference>
<reference key="29">
    <citation type="journal article" date="2021" name="Vaccines (Basel)">
        <title>HSV-1 ICP22 Is a Selective Viral Repressor of Cellular RNA Polymerase II-Mediated Transcription Elongation.</title>
        <authorList>
            <person name="Isa N.F."/>
            <person name="Bensaude O."/>
            <person name="Aziz N.C."/>
            <person name="Murphy S."/>
        </authorList>
    </citation>
    <scope>INTERACTION WITH HHV-1 TRANSCRIPTIONAL REGULATOR ICP22 (MICROBIAL INFECTION)</scope>
</reference>
<reference key="30">
    <citation type="journal article" date="2022" name="Nat. Cell Biol.">
        <title>Poly(ADP-ribosylation) of P-TEFb by PARP1 disrupts phase separation to inhibit global transcription after DNA damage.</title>
        <authorList>
            <person name="Fu H."/>
            <person name="Liu R."/>
            <person name="Jia Z."/>
            <person name="Li R."/>
            <person name="Zhu F."/>
            <person name="Zhu W."/>
            <person name="Shao Y."/>
            <person name="Jin Y."/>
            <person name="Xue Y."/>
            <person name="Huang J."/>
            <person name="Luo K."/>
            <person name="Gao X."/>
            <person name="Lu H."/>
            <person name="Zhou Q."/>
        </authorList>
    </citation>
    <scope>FUNCTION</scope>
    <scope>ADP-RIBOSYLATION AT SER-416; SER-474; SER-475; LYS-485; HIS-487; HIS-530; SER-531; SER-549; HIS-556; SER-552; SER-563 AND SER-637</scope>
</reference>
<reference key="31">
    <citation type="journal article" date="2012" name="N. Engl. J. Med.">
        <title>Diagnostic exome sequencing in persons with severe intellectual disability.</title>
        <authorList>
            <person name="de Ligt J."/>
            <person name="Willemsen M.H."/>
            <person name="van Bon B.W."/>
            <person name="Kleefstra T."/>
            <person name="Yntema H.G."/>
            <person name="Kroes T."/>
            <person name="Vulto-van Silfhout A.T."/>
            <person name="Koolen D.A."/>
            <person name="de Vries P."/>
            <person name="Gilissen C."/>
            <person name="del Rosario M."/>
            <person name="Hoischen A."/>
            <person name="Scheffer H."/>
            <person name="de Vries B.B."/>
            <person name="Brunner H.G."/>
            <person name="Veltman J.A."/>
            <person name="Vissers L.E."/>
        </authorList>
    </citation>
    <scope>VARIANT CYS-541</scope>
</reference>
<organism>
    <name type="scientific">Homo sapiens</name>
    <name type="common">Human</name>
    <dbReference type="NCBI Taxonomy" id="9606"/>
    <lineage>
        <taxon>Eukaryota</taxon>
        <taxon>Metazoa</taxon>
        <taxon>Chordata</taxon>
        <taxon>Craniata</taxon>
        <taxon>Vertebrata</taxon>
        <taxon>Euteleostomi</taxon>
        <taxon>Mammalia</taxon>
        <taxon>Eutheria</taxon>
        <taxon>Euarchontoglires</taxon>
        <taxon>Primates</taxon>
        <taxon>Haplorrhini</taxon>
        <taxon>Catarrhini</taxon>
        <taxon>Hominidae</taxon>
        <taxon>Homo</taxon>
    </lineage>
</organism>
<sequence>MEGERKNNNKRWYFTREQLENSPSRRFGVDPDKELSYRQQAANLLQDMGQRLNVSQLTINTAIVYMHRFYMIQSFTQFPGNSVAPAALFLAAKVEEQPKKLEHVIKVAHTCLHPQESLPDTRSEAYLQQVQDLVILESIILQTLGFELTIDHPHTHVVKCTQLVRASKDLAQTSYFMATNSLHLTTFSLQYTPPVVACVCIHLACKWSNWEIPVSTDGKHWWEYVDATVTLELLDELTHEFLQILEKTPNRLKRIWNWRACEAAKKTKADDRGTDEKTSEQTILNMISQSSSDTTIAGLMSMSTSTTSAVPSLPVSEESSSNLTSVEMLPGKRWLSSQPSFKLEPTQGHRTSENLALTGVDHSLPQDGSNAFISQKQNSKSVPSAKVSLKEYRAKHAEELAAQKRQLENMEANVKSQYAYAAQNLLSHHDSHSSVILKMPIEGSENPERPFLEKADKTALKMRIPVAGGDKAASSKPEEIKMRIKVHAAADKHNSVEDSVTKSREHKEKHKTHPSNHHHHHNHHSHKHSHSQLPVGTGNKRPGDPKHSSQTSNLAHKTYSLSSSFSSSSSTRKRGPSEETGGAVFDHPAKIAKSTKSSSLNFSFPSLPTMGQMPGHSSDTSGLSFSQPSCKTRVPHSKLDKGPTGANGHNTTQTIDYQDTVNMLHSLLSAQGVQPTQPTAFEFVRPYSDYLNPRSGGISSRSGNTDKPRPPPLPSEPPPPLPPLPK</sequence>
<protein>
    <recommendedName>
        <fullName evidence="24">Cyclin-T1</fullName>
        <shortName evidence="24">CycT1</shortName>
        <shortName>Cyclin-T</shortName>
    </recommendedName>
</protein>
<comment type="function">
    <text evidence="10 11 17 18 20">Regulatory subunit of the cyclin-dependent kinase pair (CDK9/cyclin-T1) complex, also called positive transcription elongation factor B (P-TEFb), which facilitates the transition from abortive to productive elongation by phosphorylating the CTD (C-terminal domain) of the large subunit of RNA polymerase II (RNA Pol II) (PubMed:16109376, PubMed:16109377, PubMed:30134174, PubMed:35393539). Required to activate the protein kinase activity of CDK9: acts by mediating formation of liquid-liquid phase separation (LLPS) that enhances binding of P-TEFb to the CTD of RNA Pol II (PubMed:29849146, PubMed:35393539).</text>
</comment>
<comment type="function">
    <text evidence="3 4">(Microbial infection) In case of HIV or SIV infections, binds to the transactivation domain of the viral nuclear transcriptional activator, Tat, thereby increasing Tat's affinity for the transactivating response RNA element (TAR RNA). Serves as an essential cofactor for Tat, by promoting RNA Pol II activation, allowing transcription of viral genes.</text>
</comment>
<comment type="subunit">
    <text evidence="6 7 8 9 10 11 12 14 15 16 18 20 22">Cyclin-T1 is the predominant cyclin that associates with CDK9 to form a heterodimer called P-TEFb (PubMed:30134174, PubMed:35393539, PubMed:9499409). P-TEFb forms a complex with AFF4/AF5Q31 (PubMed:12065898). Component of a complex which is at least composed of HTATSF1/Tat-SF1, P-TEFb complex, RNA pol II, SUPT5H, and NCL/nucleolin (PubMed:10393184). Component of the 7SK snRNP complex at least composed of P-TEFb (composed of CDK9 and CCNT1/cyclin-T1), HEXIM1, HEXIM2, BCDIN3, SART3 proteins and 7SK and U6 snRNAs (PubMed:17643375). Interacts (via central region) with ZMYND8 (via N-terminus); the interaction is direct and the association appears to occur between homodimeric ZMYND8 and the activated form of the P-TEFb complex (PubMed:30134174). Interacts with BRD4, targets chromatin binding (PubMed:16109376, PubMed:16109377, PubMed:24360279). Interacts with JMJD6 (PubMed:24360279). Interacts with MDFIC (PubMed:12944466). Interacts with HSF1 (PubMed:27189267). Interacts with HTATSF1 (PubMed:10913173). Interacts with TBX21 (PubMed:27292648).</text>
</comment>
<comment type="subunit">
    <text evidence="3 4 5 21 23">(Microbial infection) Interacts with the transactivation region of HIV-1, HIV-2 and SIV Tat.</text>
</comment>
<comment type="subunit">
    <text evidence="19">(Microbial infection) Interacts with human herpes virus 1 (HHV-1) transcriptional regulator ICP22.</text>
</comment>
<comment type="interaction">
    <interactant intactId="EBI-2479671">
        <id>O60563</id>
    </interactant>
    <interactant intactId="EBI-395282">
        <id>Q9UHB7</id>
        <label>AFF4</label>
    </interactant>
    <organismsDiffer>false</organismsDiffer>
    <experiments>8</experiments>
</comment>
<comment type="interaction">
    <interactant intactId="EBI-2479671">
        <id>O60563</id>
    </interactant>
    <interactant intactId="EBI-9345088">
        <id>O60885-1</id>
        <label>BRD4</label>
    </interactant>
    <organismsDiffer>false</organismsDiffer>
    <experiments>6</experiments>
</comment>
<comment type="interaction">
    <interactant intactId="EBI-2479671">
        <id>O60563</id>
    </interactant>
    <interactant intactId="EBI-1383449">
        <id>P50750</id>
        <label>CDK9</label>
    </interactant>
    <organismsDiffer>false</organismsDiffer>
    <experiments>30</experiments>
</comment>
<comment type="interaction">
    <interactant intactId="EBI-2479671">
        <id>O60563</id>
    </interactant>
    <interactant intactId="EBI-2832510">
        <id>O94992</id>
        <label>HEXIM1</label>
    </interactant>
    <organismsDiffer>false</organismsDiffer>
    <experiments>13</experiments>
</comment>
<comment type="interaction">
    <interactant intactId="EBI-2479671">
        <id>O60563</id>
    </interactant>
    <interactant intactId="EBI-6164389">
        <id>P04608</id>
        <label>tat</label>
    </interactant>
    <organismsDiffer>true</organismsDiffer>
    <experiments>9</experiments>
</comment>
<comment type="interaction">
    <interactant intactId="EBI-2479671">
        <id>O60563</id>
    </interactant>
    <interactant intactId="EBI-7845069">
        <id>P04610</id>
        <label>tat</label>
    </interactant>
    <organismsDiffer>true</organismsDiffer>
    <experiments>2</experiments>
</comment>
<comment type="subcellular location">
    <subcellularLocation>
        <location evidence="9 17">Nucleus</location>
    </subcellularLocation>
</comment>
<comment type="alternative products">
    <event type="alternative splicing"/>
    <isoform>
        <id>O60563-1</id>
        <name>1</name>
        <sequence type="displayed"/>
    </isoform>
    <isoform>
        <id>O60563-2</id>
        <name>2</name>
        <sequence type="described" ref="VSP_054569 VSP_054570"/>
    </isoform>
</comment>
<comment type="tissue specificity">
    <text evidence="21 22">Ubiquitously expressed.</text>
</comment>
<comment type="domain">
    <text evidence="17">The histidine-rich domain (HRD) region is intrinsically disordered and promotes the formation of phase-separated liquid droplets that enhance binding of the P-TEFb complex to the CTD (C-terminal domain) of the large subunit of RNA polymerase II (RNA Pol II).</text>
</comment>
<comment type="PTM">
    <text evidence="20">ADP-ribosylation on serine residues by PARP1 in response to DNA damage disrupts the phase separation activity of CCNT1, thereby preventing activation of CDK9.</text>
</comment>
<comment type="similarity">
    <text evidence="26">Belongs to the cyclin family. Cyclin C subfamily.</text>
</comment>
<proteinExistence type="evidence at protein level"/>